<reference key="1">
    <citation type="journal article" date="2008" name="J. Bacteriol.">
        <title>Insights into the environmental resistance gene pool from the genome sequence of the multidrug-resistant environmental isolate Escherichia coli SMS-3-5.</title>
        <authorList>
            <person name="Fricke W.F."/>
            <person name="Wright M.S."/>
            <person name="Lindell A.H."/>
            <person name="Harkins D.M."/>
            <person name="Baker-Austin C."/>
            <person name="Ravel J."/>
            <person name="Stepanauskas R."/>
        </authorList>
    </citation>
    <scope>NUCLEOTIDE SEQUENCE [LARGE SCALE GENOMIC DNA]</scope>
    <source>
        <strain>SMS-3-5 / SECEC</strain>
    </source>
</reference>
<accession>B1LM72</accession>
<organism>
    <name type="scientific">Escherichia coli (strain SMS-3-5 / SECEC)</name>
    <dbReference type="NCBI Taxonomy" id="439855"/>
    <lineage>
        <taxon>Bacteria</taxon>
        <taxon>Pseudomonadati</taxon>
        <taxon>Pseudomonadota</taxon>
        <taxon>Gammaproteobacteria</taxon>
        <taxon>Enterobacterales</taxon>
        <taxon>Enterobacteriaceae</taxon>
        <taxon>Escherichia</taxon>
    </lineage>
</organism>
<proteinExistence type="inferred from homology"/>
<comment type="function">
    <text evidence="1">Catalyzes the cyclization of GTP to (8S)-3',8-cyclo-7,8-dihydroguanosine 5'-triphosphate.</text>
</comment>
<comment type="catalytic activity">
    <reaction evidence="1">
        <text>GTP + AH2 + S-adenosyl-L-methionine = (8S)-3',8-cyclo-7,8-dihydroguanosine 5'-triphosphate + 5'-deoxyadenosine + L-methionine + A + H(+)</text>
        <dbReference type="Rhea" id="RHEA:49576"/>
        <dbReference type="ChEBI" id="CHEBI:13193"/>
        <dbReference type="ChEBI" id="CHEBI:15378"/>
        <dbReference type="ChEBI" id="CHEBI:17319"/>
        <dbReference type="ChEBI" id="CHEBI:17499"/>
        <dbReference type="ChEBI" id="CHEBI:37565"/>
        <dbReference type="ChEBI" id="CHEBI:57844"/>
        <dbReference type="ChEBI" id="CHEBI:59789"/>
        <dbReference type="ChEBI" id="CHEBI:131766"/>
        <dbReference type="EC" id="4.1.99.22"/>
    </reaction>
</comment>
<comment type="cofactor">
    <cofactor evidence="1">
        <name>[4Fe-4S] cluster</name>
        <dbReference type="ChEBI" id="CHEBI:49883"/>
    </cofactor>
    <text evidence="1">Binds 2 [4Fe-4S] clusters. Binds 1 [4Fe-4S] cluster coordinated with 3 cysteines and an exchangeable S-adenosyl-L-methionine and 1 [4Fe-4S] cluster coordinated with 3 cysteines and the GTP-derived substrate.</text>
</comment>
<comment type="pathway">
    <text evidence="1">Cofactor biosynthesis; molybdopterin biosynthesis.</text>
</comment>
<comment type="subunit">
    <text evidence="1">Monomer and homodimer.</text>
</comment>
<comment type="similarity">
    <text evidence="1">Belongs to the radical SAM superfamily. MoaA family.</text>
</comment>
<dbReference type="EC" id="4.1.99.22" evidence="1"/>
<dbReference type="EMBL" id="CP000970">
    <property type="protein sequence ID" value="ACB18237.1"/>
    <property type="molecule type" value="Genomic_DNA"/>
</dbReference>
<dbReference type="RefSeq" id="WP_001295301.1">
    <property type="nucleotide sequence ID" value="NC_010498.1"/>
</dbReference>
<dbReference type="SMR" id="B1LM72"/>
<dbReference type="GeneID" id="86863291"/>
<dbReference type="KEGG" id="ecm:EcSMS35_0804"/>
<dbReference type="HOGENOM" id="CLU_009273_0_1_6"/>
<dbReference type="UniPathway" id="UPA00344"/>
<dbReference type="Proteomes" id="UP000007011">
    <property type="component" value="Chromosome"/>
</dbReference>
<dbReference type="GO" id="GO:0051539">
    <property type="term" value="F:4 iron, 4 sulfur cluster binding"/>
    <property type="evidence" value="ECO:0007669"/>
    <property type="project" value="UniProtKB-UniRule"/>
</dbReference>
<dbReference type="GO" id="GO:0061799">
    <property type="term" value="F:cyclic pyranopterin monophosphate synthase activity"/>
    <property type="evidence" value="ECO:0007669"/>
    <property type="project" value="TreeGrafter"/>
</dbReference>
<dbReference type="GO" id="GO:0061798">
    <property type="term" value="F:GTP 3',8'-cyclase activity"/>
    <property type="evidence" value="ECO:0007669"/>
    <property type="project" value="UniProtKB-UniRule"/>
</dbReference>
<dbReference type="GO" id="GO:0005525">
    <property type="term" value="F:GTP binding"/>
    <property type="evidence" value="ECO:0007669"/>
    <property type="project" value="UniProtKB-UniRule"/>
</dbReference>
<dbReference type="GO" id="GO:0046872">
    <property type="term" value="F:metal ion binding"/>
    <property type="evidence" value="ECO:0007669"/>
    <property type="project" value="UniProtKB-KW"/>
</dbReference>
<dbReference type="GO" id="GO:1904047">
    <property type="term" value="F:S-adenosyl-L-methionine binding"/>
    <property type="evidence" value="ECO:0007669"/>
    <property type="project" value="UniProtKB-UniRule"/>
</dbReference>
<dbReference type="GO" id="GO:0006777">
    <property type="term" value="P:Mo-molybdopterin cofactor biosynthetic process"/>
    <property type="evidence" value="ECO:0007669"/>
    <property type="project" value="UniProtKB-UniRule"/>
</dbReference>
<dbReference type="CDD" id="cd01335">
    <property type="entry name" value="Radical_SAM"/>
    <property type="match status" value="1"/>
</dbReference>
<dbReference type="CDD" id="cd21117">
    <property type="entry name" value="Twitch_MoaA"/>
    <property type="match status" value="1"/>
</dbReference>
<dbReference type="FunFam" id="3.20.20.70:FF:000057">
    <property type="entry name" value="GTP 3',8-cyclase"/>
    <property type="match status" value="1"/>
</dbReference>
<dbReference type="Gene3D" id="3.20.20.70">
    <property type="entry name" value="Aldolase class I"/>
    <property type="match status" value="1"/>
</dbReference>
<dbReference type="HAMAP" id="MF_01225_B">
    <property type="entry name" value="MoaA_B"/>
    <property type="match status" value="1"/>
</dbReference>
<dbReference type="InterPro" id="IPR013785">
    <property type="entry name" value="Aldolase_TIM"/>
</dbReference>
<dbReference type="InterPro" id="IPR006638">
    <property type="entry name" value="Elp3/MiaA/NifB-like_rSAM"/>
</dbReference>
<dbReference type="InterPro" id="IPR013483">
    <property type="entry name" value="MoaA"/>
</dbReference>
<dbReference type="InterPro" id="IPR000385">
    <property type="entry name" value="MoaA_NifB_PqqE_Fe-S-bd_CS"/>
</dbReference>
<dbReference type="InterPro" id="IPR010505">
    <property type="entry name" value="MoaA_twitch"/>
</dbReference>
<dbReference type="InterPro" id="IPR050105">
    <property type="entry name" value="MoCo_biosynth_MoaA/MoaC"/>
</dbReference>
<dbReference type="InterPro" id="IPR007197">
    <property type="entry name" value="rSAM"/>
</dbReference>
<dbReference type="NCBIfam" id="TIGR02666">
    <property type="entry name" value="moaA"/>
    <property type="match status" value="1"/>
</dbReference>
<dbReference type="PANTHER" id="PTHR22960:SF28">
    <property type="entry name" value="GTP 3',8-CYCLASE"/>
    <property type="match status" value="1"/>
</dbReference>
<dbReference type="PANTHER" id="PTHR22960">
    <property type="entry name" value="MOLYBDOPTERIN COFACTOR SYNTHESIS PROTEIN A"/>
    <property type="match status" value="1"/>
</dbReference>
<dbReference type="Pfam" id="PF13353">
    <property type="entry name" value="Fer4_12"/>
    <property type="match status" value="1"/>
</dbReference>
<dbReference type="Pfam" id="PF06463">
    <property type="entry name" value="Mob_synth_C"/>
    <property type="match status" value="1"/>
</dbReference>
<dbReference type="Pfam" id="PF04055">
    <property type="entry name" value="Radical_SAM"/>
    <property type="match status" value="1"/>
</dbReference>
<dbReference type="SFLD" id="SFLDG01383">
    <property type="entry name" value="cyclic_pyranopterin_phosphate"/>
    <property type="match status" value="1"/>
</dbReference>
<dbReference type="SFLD" id="SFLDG01072">
    <property type="entry name" value="dehydrogenase_like"/>
    <property type="match status" value="1"/>
</dbReference>
<dbReference type="SMART" id="SM00729">
    <property type="entry name" value="Elp3"/>
    <property type="match status" value="1"/>
</dbReference>
<dbReference type="SUPFAM" id="SSF102114">
    <property type="entry name" value="Radical SAM enzymes"/>
    <property type="match status" value="1"/>
</dbReference>
<dbReference type="PROSITE" id="PS01305">
    <property type="entry name" value="MOAA_NIFB_PQQE"/>
    <property type="match status" value="1"/>
</dbReference>
<dbReference type="PROSITE" id="PS51918">
    <property type="entry name" value="RADICAL_SAM"/>
    <property type="match status" value="1"/>
</dbReference>
<name>MOAA_ECOSM</name>
<evidence type="ECO:0000255" key="1">
    <source>
        <dbReference type="HAMAP-Rule" id="MF_01225"/>
    </source>
</evidence>
<evidence type="ECO:0000255" key="2">
    <source>
        <dbReference type="PROSITE-ProRule" id="PRU01266"/>
    </source>
</evidence>
<protein>
    <recommendedName>
        <fullName evidence="1">GTP 3',8-cyclase</fullName>
        <ecNumber evidence="1">4.1.99.22</ecNumber>
    </recommendedName>
    <alternativeName>
        <fullName evidence="1">Molybdenum cofactor biosynthesis protein A</fullName>
    </alternativeName>
</protein>
<keyword id="KW-0004">4Fe-4S</keyword>
<keyword id="KW-0342">GTP-binding</keyword>
<keyword id="KW-0408">Iron</keyword>
<keyword id="KW-0411">Iron-sulfur</keyword>
<keyword id="KW-0456">Lyase</keyword>
<keyword id="KW-0479">Metal-binding</keyword>
<keyword id="KW-0501">Molybdenum cofactor biosynthesis</keyword>
<keyword id="KW-0547">Nucleotide-binding</keyword>
<keyword id="KW-0949">S-adenosyl-L-methionine</keyword>
<sequence>MASQLTDAFARKFYYLRLSITDVCNFRCTYCLPDGYKPSGVTNKGFLTVDEIRRVTRAFASLGTEKVRLTGGEPSLRRDFTDIIAAVRENDAIRQIAVTTNGYRLERDVANWRDAGLTGINVSVDSLDARQFHAITGQDKFNQVMAGIDAAFEAGFEKVKVNTVLMRDVNHHQLDTFLNWIQHRPIQLRFIELMETGEGSELFRKHHISGQVLRDELLRRGWIHQLRQRSDGPAQVFCHPDYAGEIGLIMPYEKDFCATCNRLRVSSIGKLHLCLFGEGGVNLRDLLEDDTQQQALEARISAALREKKQTHFLHQNNTGITQNLSYIGG</sequence>
<feature type="chain" id="PRO_1000139325" description="GTP 3',8-cyclase">
    <location>
        <begin position="1"/>
        <end position="329"/>
    </location>
</feature>
<feature type="domain" description="Radical SAM core" evidence="2">
    <location>
        <begin position="8"/>
        <end position="234"/>
    </location>
</feature>
<feature type="binding site" evidence="1">
    <location>
        <position position="17"/>
    </location>
    <ligand>
        <name>GTP</name>
        <dbReference type="ChEBI" id="CHEBI:37565"/>
    </ligand>
</feature>
<feature type="binding site" evidence="1">
    <location>
        <position position="24"/>
    </location>
    <ligand>
        <name>[4Fe-4S] cluster</name>
        <dbReference type="ChEBI" id="CHEBI:49883"/>
        <label>1</label>
        <note>4Fe-4S-S-AdoMet</note>
    </ligand>
</feature>
<feature type="binding site" evidence="1">
    <location>
        <position position="28"/>
    </location>
    <ligand>
        <name>[4Fe-4S] cluster</name>
        <dbReference type="ChEBI" id="CHEBI:49883"/>
        <label>1</label>
        <note>4Fe-4S-S-AdoMet</note>
    </ligand>
</feature>
<feature type="binding site" evidence="1">
    <location>
        <position position="30"/>
    </location>
    <ligand>
        <name>S-adenosyl-L-methionine</name>
        <dbReference type="ChEBI" id="CHEBI:59789"/>
    </ligand>
</feature>
<feature type="binding site" evidence="1">
    <location>
        <position position="31"/>
    </location>
    <ligand>
        <name>[4Fe-4S] cluster</name>
        <dbReference type="ChEBI" id="CHEBI:49883"/>
        <label>1</label>
        <note>4Fe-4S-S-AdoMet</note>
    </ligand>
</feature>
<feature type="binding site" evidence="1">
    <location>
        <position position="68"/>
    </location>
    <ligand>
        <name>GTP</name>
        <dbReference type="ChEBI" id="CHEBI:37565"/>
    </ligand>
</feature>
<feature type="binding site" evidence="1">
    <location>
        <position position="72"/>
    </location>
    <ligand>
        <name>S-adenosyl-L-methionine</name>
        <dbReference type="ChEBI" id="CHEBI:59789"/>
    </ligand>
</feature>
<feature type="binding site" evidence="1">
    <location>
        <position position="99"/>
    </location>
    <ligand>
        <name>GTP</name>
        <dbReference type="ChEBI" id="CHEBI:37565"/>
    </ligand>
</feature>
<feature type="binding site" evidence="1">
    <location>
        <position position="123"/>
    </location>
    <ligand>
        <name>S-adenosyl-L-methionine</name>
        <dbReference type="ChEBI" id="CHEBI:59789"/>
    </ligand>
</feature>
<feature type="binding site" evidence="1">
    <location>
        <position position="160"/>
    </location>
    <ligand>
        <name>GTP</name>
        <dbReference type="ChEBI" id="CHEBI:37565"/>
    </ligand>
</feature>
<feature type="binding site" evidence="1">
    <location>
        <position position="194"/>
    </location>
    <ligand>
        <name>S-adenosyl-L-methionine</name>
        <dbReference type="ChEBI" id="CHEBI:59789"/>
    </ligand>
</feature>
<feature type="binding site" evidence="1">
    <location>
        <position position="257"/>
    </location>
    <ligand>
        <name>[4Fe-4S] cluster</name>
        <dbReference type="ChEBI" id="CHEBI:49883"/>
        <label>2</label>
        <note>4Fe-4S-substrate</note>
    </ligand>
</feature>
<feature type="binding site" evidence="1">
    <location>
        <position position="260"/>
    </location>
    <ligand>
        <name>[4Fe-4S] cluster</name>
        <dbReference type="ChEBI" id="CHEBI:49883"/>
        <label>2</label>
        <note>4Fe-4S-substrate</note>
    </ligand>
</feature>
<feature type="binding site" evidence="1">
    <location>
        <begin position="262"/>
        <end position="264"/>
    </location>
    <ligand>
        <name>GTP</name>
        <dbReference type="ChEBI" id="CHEBI:37565"/>
    </ligand>
</feature>
<feature type="binding site" evidence="1">
    <location>
        <position position="274"/>
    </location>
    <ligand>
        <name>[4Fe-4S] cluster</name>
        <dbReference type="ChEBI" id="CHEBI:49883"/>
        <label>2</label>
        <note>4Fe-4S-substrate</note>
    </ligand>
</feature>
<gene>
    <name evidence="1" type="primary">moaA</name>
    <name type="ordered locus">EcSMS35_0804</name>
</gene>